<organism>
    <name type="scientific">Anaeromyxobacter sp. (strain Fw109-5)</name>
    <dbReference type="NCBI Taxonomy" id="404589"/>
    <lineage>
        <taxon>Bacteria</taxon>
        <taxon>Pseudomonadati</taxon>
        <taxon>Myxococcota</taxon>
        <taxon>Myxococcia</taxon>
        <taxon>Myxococcales</taxon>
        <taxon>Cystobacterineae</taxon>
        <taxon>Anaeromyxobacteraceae</taxon>
        <taxon>Anaeromyxobacter</taxon>
    </lineage>
</organism>
<feature type="chain" id="PRO_1000015930" description="Aspartyl/glutamyl-tRNA(Asn/Gln) amidotransferase subunit B">
    <location>
        <begin position="1"/>
        <end position="483"/>
    </location>
</feature>
<keyword id="KW-0067">ATP-binding</keyword>
<keyword id="KW-0436">Ligase</keyword>
<keyword id="KW-0547">Nucleotide-binding</keyword>
<keyword id="KW-0648">Protein biosynthesis</keyword>
<keyword id="KW-1185">Reference proteome</keyword>
<protein>
    <recommendedName>
        <fullName evidence="1">Aspartyl/glutamyl-tRNA(Asn/Gln) amidotransferase subunit B</fullName>
        <shortName evidence="1">Asp/Glu-ADT subunit B</shortName>
        <ecNumber evidence="1">6.3.5.-</ecNumber>
    </recommendedName>
</protein>
<comment type="function">
    <text evidence="1">Allows the formation of correctly charged Asn-tRNA(Asn) or Gln-tRNA(Gln) through the transamidation of misacylated Asp-tRNA(Asn) or Glu-tRNA(Gln) in organisms which lack either or both of asparaginyl-tRNA or glutaminyl-tRNA synthetases. The reaction takes place in the presence of glutamine and ATP through an activated phospho-Asp-tRNA(Asn) or phospho-Glu-tRNA(Gln).</text>
</comment>
<comment type="catalytic activity">
    <reaction evidence="1">
        <text>L-glutamyl-tRNA(Gln) + L-glutamine + ATP + H2O = L-glutaminyl-tRNA(Gln) + L-glutamate + ADP + phosphate + H(+)</text>
        <dbReference type="Rhea" id="RHEA:17521"/>
        <dbReference type="Rhea" id="RHEA-COMP:9681"/>
        <dbReference type="Rhea" id="RHEA-COMP:9684"/>
        <dbReference type="ChEBI" id="CHEBI:15377"/>
        <dbReference type="ChEBI" id="CHEBI:15378"/>
        <dbReference type="ChEBI" id="CHEBI:29985"/>
        <dbReference type="ChEBI" id="CHEBI:30616"/>
        <dbReference type="ChEBI" id="CHEBI:43474"/>
        <dbReference type="ChEBI" id="CHEBI:58359"/>
        <dbReference type="ChEBI" id="CHEBI:78520"/>
        <dbReference type="ChEBI" id="CHEBI:78521"/>
        <dbReference type="ChEBI" id="CHEBI:456216"/>
    </reaction>
</comment>
<comment type="catalytic activity">
    <reaction evidence="1">
        <text>L-aspartyl-tRNA(Asn) + L-glutamine + ATP + H2O = L-asparaginyl-tRNA(Asn) + L-glutamate + ADP + phosphate + 2 H(+)</text>
        <dbReference type="Rhea" id="RHEA:14513"/>
        <dbReference type="Rhea" id="RHEA-COMP:9674"/>
        <dbReference type="Rhea" id="RHEA-COMP:9677"/>
        <dbReference type="ChEBI" id="CHEBI:15377"/>
        <dbReference type="ChEBI" id="CHEBI:15378"/>
        <dbReference type="ChEBI" id="CHEBI:29985"/>
        <dbReference type="ChEBI" id="CHEBI:30616"/>
        <dbReference type="ChEBI" id="CHEBI:43474"/>
        <dbReference type="ChEBI" id="CHEBI:58359"/>
        <dbReference type="ChEBI" id="CHEBI:78515"/>
        <dbReference type="ChEBI" id="CHEBI:78516"/>
        <dbReference type="ChEBI" id="CHEBI:456216"/>
    </reaction>
</comment>
<comment type="subunit">
    <text evidence="1">Heterotrimer of A, B and C subunits.</text>
</comment>
<comment type="similarity">
    <text evidence="1">Belongs to the GatB/GatE family. GatB subfamily.</text>
</comment>
<name>GATB_ANADF</name>
<sequence>MPVSDFQVVLGLEVHAQLLTRSKIFCACPTEFGGAPNTHVCPVCLGLPGALPALNAAVVEMAIRTGLALGCEIQRRSVFARKNYFYPDLPKGYQISQYELPICSGGGVDIAVGGEARRIRLTRIHMEEDAGKNVHDVTAAGSGVDLNRAGVPLLEIVSEPDLRSIDEAIAYLKSLRAILMALGVNDGNLQEGSFRCDANVSVMPRGATRLGTRCELKNMNSFRFLRQAIDYEVRRQVELIESGGKVDQETRLFDPDRGETRSMRSKEEAHDYRYFPEPDLPPVLVDEALVERIRRELPELPRARSARYQRDLGLSAQDAELLVSDKGIGDFFDATLAAYGASPDAAKRIANLLNGDVARLANELSLEPAAWRIAPAQLAAILRLQDAQTIGGPGAKQVVEEVFRSGAEPAEVVREKGLAQVSDEGALEAAVDRVLAASAGEVERYRGGNKKLLGFFVGQVMKETRGKGNPAVVNALLKRKLGG</sequence>
<proteinExistence type="inferred from homology"/>
<evidence type="ECO:0000255" key="1">
    <source>
        <dbReference type="HAMAP-Rule" id="MF_00121"/>
    </source>
</evidence>
<accession>A7HIG8</accession>
<dbReference type="EC" id="6.3.5.-" evidence="1"/>
<dbReference type="EMBL" id="CP000769">
    <property type="protein sequence ID" value="ABS28514.1"/>
    <property type="molecule type" value="Genomic_DNA"/>
</dbReference>
<dbReference type="RefSeq" id="WP_012099159.1">
    <property type="nucleotide sequence ID" value="NC_009675.1"/>
</dbReference>
<dbReference type="SMR" id="A7HIG8"/>
<dbReference type="STRING" id="404589.Anae109_4336"/>
<dbReference type="KEGG" id="afw:Anae109_4336"/>
<dbReference type="eggNOG" id="COG0064">
    <property type="taxonomic scope" value="Bacteria"/>
</dbReference>
<dbReference type="HOGENOM" id="CLU_019240_0_0_7"/>
<dbReference type="OrthoDB" id="9804078at2"/>
<dbReference type="Proteomes" id="UP000006382">
    <property type="component" value="Chromosome"/>
</dbReference>
<dbReference type="GO" id="GO:0050566">
    <property type="term" value="F:asparaginyl-tRNA synthase (glutamine-hydrolyzing) activity"/>
    <property type="evidence" value="ECO:0007669"/>
    <property type="project" value="RHEA"/>
</dbReference>
<dbReference type="GO" id="GO:0005524">
    <property type="term" value="F:ATP binding"/>
    <property type="evidence" value="ECO:0007669"/>
    <property type="project" value="UniProtKB-KW"/>
</dbReference>
<dbReference type="GO" id="GO:0050567">
    <property type="term" value="F:glutaminyl-tRNA synthase (glutamine-hydrolyzing) activity"/>
    <property type="evidence" value="ECO:0007669"/>
    <property type="project" value="UniProtKB-UniRule"/>
</dbReference>
<dbReference type="GO" id="GO:0070681">
    <property type="term" value="P:glutaminyl-tRNAGln biosynthesis via transamidation"/>
    <property type="evidence" value="ECO:0007669"/>
    <property type="project" value="TreeGrafter"/>
</dbReference>
<dbReference type="GO" id="GO:0006412">
    <property type="term" value="P:translation"/>
    <property type="evidence" value="ECO:0007669"/>
    <property type="project" value="UniProtKB-UniRule"/>
</dbReference>
<dbReference type="FunFam" id="1.10.10.410:FF:000001">
    <property type="entry name" value="Aspartyl/glutamyl-tRNA(Asn/Gln) amidotransferase subunit B"/>
    <property type="match status" value="1"/>
</dbReference>
<dbReference type="Gene3D" id="1.10.10.410">
    <property type="match status" value="1"/>
</dbReference>
<dbReference type="Gene3D" id="1.10.150.380">
    <property type="entry name" value="GatB domain, N-terminal subdomain"/>
    <property type="match status" value="1"/>
</dbReference>
<dbReference type="HAMAP" id="MF_00121">
    <property type="entry name" value="GatB"/>
    <property type="match status" value="1"/>
</dbReference>
<dbReference type="InterPro" id="IPR017959">
    <property type="entry name" value="Asn/Gln-tRNA_amidoTrfase_suB/E"/>
</dbReference>
<dbReference type="InterPro" id="IPR006075">
    <property type="entry name" value="Asn/Gln-tRNA_Trfase_suB/E_cat"/>
</dbReference>
<dbReference type="InterPro" id="IPR018027">
    <property type="entry name" value="Asn/Gln_amidotransferase"/>
</dbReference>
<dbReference type="InterPro" id="IPR003789">
    <property type="entry name" value="Asn/Gln_tRNA_amidoTrase-B-like"/>
</dbReference>
<dbReference type="InterPro" id="IPR004413">
    <property type="entry name" value="GatB"/>
</dbReference>
<dbReference type="InterPro" id="IPR042114">
    <property type="entry name" value="GatB_C_1"/>
</dbReference>
<dbReference type="InterPro" id="IPR023168">
    <property type="entry name" value="GatB_Yqey_C_2"/>
</dbReference>
<dbReference type="InterPro" id="IPR017958">
    <property type="entry name" value="Gln-tRNA_amidoTrfase_suB_CS"/>
</dbReference>
<dbReference type="InterPro" id="IPR014746">
    <property type="entry name" value="Gln_synth/guanido_kin_cat_dom"/>
</dbReference>
<dbReference type="NCBIfam" id="TIGR00133">
    <property type="entry name" value="gatB"/>
    <property type="match status" value="1"/>
</dbReference>
<dbReference type="NCBIfam" id="NF004012">
    <property type="entry name" value="PRK05477.1-2"/>
    <property type="match status" value="1"/>
</dbReference>
<dbReference type="NCBIfam" id="NF004014">
    <property type="entry name" value="PRK05477.1-4"/>
    <property type="match status" value="1"/>
</dbReference>
<dbReference type="PANTHER" id="PTHR11659">
    <property type="entry name" value="GLUTAMYL-TRNA GLN AMIDOTRANSFERASE SUBUNIT B MITOCHONDRIAL AND PROKARYOTIC PET112-RELATED"/>
    <property type="match status" value="1"/>
</dbReference>
<dbReference type="PANTHER" id="PTHR11659:SF0">
    <property type="entry name" value="GLUTAMYL-TRNA(GLN) AMIDOTRANSFERASE SUBUNIT B, MITOCHONDRIAL"/>
    <property type="match status" value="1"/>
</dbReference>
<dbReference type="Pfam" id="PF02934">
    <property type="entry name" value="GatB_N"/>
    <property type="match status" value="1"/>
</dbReference>
<dbReference type="Pfam" id="PF02637">
    <property type="entry name" value="GatB_Yqey"/>
    <property type="match status" value="1"/>
</dbReference>
<dbReference type="SMART" id="SM00845">
    <property type="entry name" value="GatB_Yqey"/>
    <property type="match status" value="1"/>
</dbReference>
<dbReference type="SUPFAM" id="SSF89095">
    <property type="entry name" value="GatB/YqeY motif"/>
    <property type="match status" value="1"/>
</dbReference>
<dbReference type="SUPFAM" id="SSF55931">
    <property type="entry name" value="Glutamine synthetase/guanido kinase"/>
    <property type="match status" value="1"/>
</dbReference>
<dbReference type="PROSITE" id="PS01234">
    <property type="entry name" value="GATB"/>
    <property type="match status" value="1"/>
</dbReference>
<gene>
    <name evidence="1" type="primary">gatB</name>
    <name type="ordered locus">Anae109_4336</name>
</gene>
<reference key="1">
    <citation type="journal article" date="2015" name="Genome Announc.">
        <title>Complete genome sequence of Anaeromyxobacter sp. Fw109-5, an anaerobic, metal-reducing bacterium isolated from a contaminated subsurface environment.</title>
        <authorList>
            <person name="Hwang C."/>
            <person name="Copeland A."/>
            <person name="Lucas S."/>
            <person name="Lapidus A."/>
            <person name="Barry K."/>
            <person name="Glavina Del Rio T."/>
            <person name="Dalin E."/>
            <person name="Tice H."/>
            <person name="Pitluck S."/>
            <person name="Sims D."/>
            <person name="Brettin T."/>
            <person name="Bruce D.C."/>
            <person name="Detter J.C."/>
            <person name="Han C.S."/>
            <person name="Schmutz J."/>
            <person name="Larimer F.W."/>
            <person name="Land M.L."/>
            <person name="Hauser L.J."/>
            <person name="Kyrpides N."/>
            <person name="Lykidis A."/>
            <person name="Richardson P."/>
            <person name="Belieav A."/>
            <person name="Sanford R.A."/>
            <person name="Loeffler F.E."/>
            <person name="Fields M.W."/>
        </authorList>
    </citation>
    <scope>NUCLEOTIDE SEQUENCE [LARGE SCALE GENOMIC DNA]</scope>
    <source>
        <strain>Fw109-5</strain>
    </source>
</reference>